<evidence type="ECO:0000255" key="1">
    <source>
        <dbReference type="HAMAP-Rule" id="MF_01395"/>
    </source>
</evidence>
<evidence type="ECO:0000255" key="2">
    <source>
        <dbReference type="PROSITE-ProRule" id="PRU01136"/>
    </source>
</evidence>
<gene>
    <name evidence="1" type="primary">accD</name>
    <name type="ordered locus">Haur_3537</name>
</gene>
<dbReference type="EC" id="2.1.3.15" evidence="1"/>
<dbReference type="EMBL" id="CP000875">
    <property type="protein sequence ID" value="ABX06173.1"/>
    <property type="molecule type" value="Genomic_DNA"/>
</dbReference>
<dbReference type="SMR" id="A9B536"/>
<dbReference type="FunCoup" id="A9B536">
    <property type="interactions" value="251"/>
</dbReference>
<dbReference type="STRING" id="316274.Haur_3537"/>
<dbReference type="KEGG" id="hau:Haur_3537"/>
<dbReference type="eggNOG" id="COG0777">
    <property type="taxonomic scope" value="Bacteria"/>
</dbReference>
<dbReference type="HOGENOM" id="CLU_015486_1_1_0"/>
<dbReference type="InParanoid" id="A9B536"/>
<dbReference type="UniPathway" id="UPA00655">
    <property type="reaction ID" value="UER00711"/>
</dbReference>
<dbReference type="Proteomes" id="UP000000787">
    <property type="component" value="Chromosome"/>
</dbReference>
<dbReference type="GO" id="GO:0009317">
    <property type="term" value="C:acetyl-CoA carboxylase complex"/>
    <property type="evidence" value="ECO:0007669"/>
    <property type="project" value="InterPro"/>
</dbReference>
<dbReference type="GO" id="GO:0003989">
    <property type="term" value="F:acetyl-CoA carboxylase activity"/>
    <property type="evidence" value="ECO:0007669"/>
    <property type="project" value="InterPro"/>
</dbReference>
<dbReference type="GO" id="GO:0005524">
    <property type="term" value="F:ATP binding"/>
    <property type="evidence" value="ECO:0007669"/>
    <property type="project" value="UniProtKB-KW"/>
</dbReference>
<dbReference type="GO" id="GO:0016743">
    <property type="term" value="F:carboxyl- or carbamoyltransferase activity"/>
    <property type="evidence" value="ECO:0007669"/>
    <property type="project" value="UniProtKB-UniRule"/>
</dbReference>
<dbReference type="GO" id="GO:0008270">
    <property type="term" value="F:zinc ion binding"/>
    <property type="evidence" value="ECO:0007669"/>
    <property type="project" value="UniProtKB-UniRule"/>
</dbReference>
<dbReference type="GO" id="GO:0006633">
    <property type="term" value="P:fatty acid biosynthetic process"/>
    <property type="evidence" value="ECO:0007669"/>
    <property type="project" value="UniProtKB-KW"/>
</dbReference>
<dbReference type="GO" id="GO:2001295">
    <property type="term" value="P:malonyl-CoA biosynthetic process"/>
    <property type="evidence" value="ECO:0007669"/>
    <property type="project" value="UniProtKB-UniRule"/>
</dbReference>
<dbReference type="Gene3D" id="3.90.226.10">
    <property type="entry name" value="2-enoyl-CoA Hydratase, Chain A, domain 1"/>
    <property type="match status" value="1"/>
</dbReference>
<dbReference type="HAMAP" id="MF_01395">
    <property type="entry name" value="AcetylCoA_CT_beta"/>
    <property type="match status" value="1"/>
</dbReference>
<dbReference type="InterPro" id="IPR034733">
    <property type="entry name" value="AcCoA_carboxyl_beta"/>
</dbReference>
<dbReference type="InterPro" id="IPR000438">
    <property type="entry name" value="Acetyl_CoA_COase_Trfase_b_su"/>
</dbReference>
<dbReference type="InterPro" id="IPR029045">
    <property type="entry name" value="ClpP/crotonase-like_dom_sf"/>
</dbReference>
<dbReference type="InterPro" id="IPR011762">
    <property type="entry name" value="COA_CT_N"/>
</dbReference>
<dbReference type="InterPro" id="IPR041010">
    <property type="entry name" value="Znf-ACC"/>
</dbReference>
<dbReference type="NCBIfam" id="TIGR00515">
    <property type="entry name" value="accD"/>
    <property type="match status" value="1"/>
</dbReference>
<dbReference type="PANTHER" id="PTHR42995">
    <property type="entry name" value="ACETYL-COENZYME A CARBOXYLASE CARBOXYL TRANSFERASE SUBUNIT BETA, CHLOROPLASTIC"/>
    <property type="match status" value="1"/>
</dbReference>
<dbReference type="PANTHER" id="PTHR42995:SF5">
    <property type="entry name" value="ACETYL-COENZYME A CARBOXYLASE CARBOXYL TRANSFERASE SUBUNIT BETA, CHLOROPLASTIC"/>
    <property type="match status" value="1"/>
</dbReference>
<dbReference type="Pfam" id="PF01039">
    <property type="entry name" value="Carboxyl_trans"/>
    <property type="match status" value="1"/>
</dbReference>
<dbReference type="Pfam" id="PF17848">
    <property type="entry name" value="Zn_ribbon_ACC"/>
    <property type="match status" value="1"/>
</dbReference>
<dbReference type="PRINTS" id="PR01070">
    <property type="entry name" value="ACCCTRFRASEB"/>
</dbReference>
<dbReference type="SUPFAM" id="SSF52096">
    <property type="entry name" value="ClpP/crotonase"/>
    <property type="match status" value="1"/>
</dbReference>
<dbReference type="PROSITE" id="PS50980">
    <property type="entry name" value="COA_CT_NTER"/>
    <property type="match status" value="1"/>
</dbReference>
<protein>
    <recommendedName>
        <fullName evidence="1">Acetyl-coenzyme A carboxylase carboxyl transferase subunit beta</fullName>
        <shortName evidence="1">ACCase subunit beta</shortName>
        <shortName evidence="1">Acetyl-CoA carboxylase carboxyltransferase subunit beta</shortName>
        <ecNumber evidence="1">2.1.3.15</ecNumber>
    </recommendedName>
</protein>
<sequence length="298" mass="32717">MKDFFRRAPLPFTSSRREQQIPDNVWAKCANCGELTYQKQFNDALKVCPKCSYHSRISSREWIEVLADADSFVEYDADLQGIDILGFVSPKDNYEAKLAATSERTGTNDVVMSGSASIEGLPFEIAACNFEFMGGSMGSVFGEKVARAVERAADRGVPVLTINASGGARMHEGIFALMQMAKVSVALTRLARVRQPHISLLVDPCYGGVSASYASVADIILAEPGANIGFAGRRVIEQTIRQKLPPNFQTAEFFLEHGMIDAVVPRSDMRATIGRLLRLYQRPTSSADHREHVVAGHQ</sequence>
<feature type="chain" id="PRO_0000389755" description="Acetyl-coenzyme A carboxylase carboxyl transferase subunit beta">
    <location>
        <begin position="1"/>
        <end position="298"/>
    </location>
</feature>
<feature type="domain" description="CoA carboxyltransferase N-terminal" evidence="2">
    <location>
        <begin position="25"/>
        <end position="295"/>
    </location>
</feature>
<feature type="zinc finger region" description="C4-type" evidence="1">
    <location>
        <begin position="29"/>
        <end position="51"/>
    </location>
</feature>
<feature type="binding site" evidence="1">
    <location>
        <position position="29"/>
    </location>
    <ligand>
        <name>Zn(2+)</name>
        <dbReference type="ChEBI" id="CHEBI:29105"/>
    </ligand>
</feature>
<feature type="binding site" evidence="1">
    <location>
        <position position="32"/>
    </location>
    <ligand>
        <name>Zn(2+)</name>
        <dbReference type="ChEBI" id="CHEBI:29105"/>
    </ligand>
</feature>
<feature type="binding site" evidence="1">
    <location>
        <position position="48"/>
    </location>
    <ligand>
        <name>Zn(2+)</name>
        <dbReference type="ChEBI" id="CHEBI:29105"/>
    </ligand>
</feature>
<feature type="binding site" evidence="1">
    <location>
        <position position="51"/>
    </location>
    <ligand>
        <name>Zn(2+)</name>
        <dbReference type="ChEBI" id="CHEBI:29105"/>
    </ligand>
</feature>
<name>ACCD_HERA2</name>
<proteinExistence type="inferred from homology"/>
<keyword id="KW-0067">ATP-binding</keyword>
<keyword id="KW-0963">Cytoplasm</keyword>
<keyword id="KW-0275">Fatty acid biosynthesis</keyword>
<keyword id="KW-0276">Fatty acid metabolism</keyword>
<keyword id="KW-0444">Lipid biosynthesis</keyword>
<keyword id="KW-0443">Lipid metabolism</keyword>
<keyword id="KW-0479">Metal-binding</keyword>
<keyword id="KW-0547">Nucleotide-binding</keyword>
<keyword id="KW-0808">Transferase</keyword>
<keyword id="KW-0862">Zinc</keyword>
<keyword id="KW-0863">Zinc-finger</keyword>
<comment type="function">
    <text evidence="1">Component of the acetyl coenzyme A carboxylase (ACC) complex. Biotin carboxylase (BC) catalyzes the carboxylation of biotin on its carrier protein (BCCP) and then the CO(2) group is transferred by the transcarboxylase to acetyl-CoA to form malonyl-CoA.</text>
</comment>
<comment type="catalytic activity">
    <reaction evidence="1">
        <text>N(6)-carboxybiotinyl-L-lysyl-[protein] + acetyl-CoA = N(6)-biotinyl-L-lysyl-[protein] + malonyl-CoA</text>
        <dbReference type="Rhea" id="RHEA:54728"/>
        <dbReference type="Rhea" id="RHEA-COMP:10505"/>
        <dbReference type="Rhea" id="RHEA-COMP:10506"/>
        <dbReference type="ChEBI" id="CHEBI:57288"/>
        <dbReference type="ChEBI" id="CHEBI:57384"/>
        <dbReference type="ChEBI" id="CHEBI:83144"/>
        <dbReference type="ChEBI" id="CHEBI:83145"/>
        <dbReference type="EC" id="2.1.3.15"/>
    </reaction>
</comment>
<comment type="cofactor">
    <cofactor evidence="1">
        <name>Zn(2+)</name>
        <dbReference type="ChEBI" id="CHEBI:29105"/>
    </cofactor>
    <text evidence="1">Binds 1 zinc ion per subunit.</text>
</comment>
<comment type="pathway">
    <text evidence="1">Lipid metabolism; malonyl-CoA biosynthesis; malonyl-CoA from acetyl-CoA: step 1/1.</text>
</comment>
<comment type="subunit">
    <text evidence="1">Acetyl-CoA carboxylase is a heterohexamer composed of biotin carboxyl carrier protein (AccB), biotin carboxylase (AccC) and two subunits each of ACCase subunit alpha (AccA) and ACCase subunit beta (AccD).</text>
</comment>
<comment type="subcellular location">
    <subcellularLocation>
        <location evidence="1">Cytoplasm</location>
    </subcellularLocation>
</comment>
<comment type="similarity">
    <text evidence="1">Belongs to the AccD/PCCB family.</text>
</comment>
<organism>
    <name type="scientific">Herpetosiphon aurantiacus (strain ATCC 23779 / DSM 785 / 114-95)</name>
    <dbReference type="NCBI Taxonomy" id="316274"/>
    <lineage>
        <taxon>Bacteria</taxon>
        <taxon>Bacillati</taxon>
        <taxon>Chloroflexota</taxon>
        <taxon>Chloroflexia</taxon>
        <taxon>Herpetosiphonales</taxon>
        <taxon>Herpetosiphonaceae</taxon>
        <taxon>Herpetosiphon</taxon>
    </lineage>
</organism>
<reference key="1">
    <citation type="journal article" date="2011" name="Stand. Genomic Sci.">
        <title>Complete genome sequence of the filamentous gliding predatory bacterium Herpetosiphon aurantiacus type strain (114-95(T)).</title>
        <authorList>
            <person name="Kiss H."/>
            <person name="Nett M."/>
            <person name="Domin N."/>
            <person name="Martin K."/>
            <person name="Maresca J.A."/>
            <person name="Copeland A."/>
            <person name="Lapidus A."/>
            <person name="Lucas S."/>
            <person name="Berry K.W."/>
            <person name="Glavina Del Rio T."/>
            <person name="Dalin E."/>
            <person name="Tice H."/>
            <person name="Pitluck S."/>
            <person name="Richardson P."/>
            <person name="Bruce D."/>
            <person name="Goodwin L."/>
            <person name="Han C."/>
            <person name="Detter J.C."/>
            <person name="Schmutz J."/>
            <person name="Brettin T."/>
            <person name="Land M."/>
            <person name="Hauser L."/>
            <person name="Kyrpides N.C."/>
            <person name="Ivanova N."/>
            <person name="Goeker M."/>
            <person name="Woyke T."/>
            <person name="Klenk H.P."/>
            <person name="Bryant D.A."/>
        </authorList>
    </citation>
    <scope>NUCLEOTIDE SEQUENCE [LARGE SCALE GENOMIC DNA]</scope>
    <source>
        <strain>ATCC 23779 / DSM 785 / 114-95</strain>
    </source>
</reference>
<accession>A9B536</accession>